<name>YQEF_BACSU</name>
<gene>
    <name type="primary">yqeF</name>
    <name type="ordered locus">BSU25700</name>
</gene>
<comment type="subcellular location">
    <subcellularLocation>
        <location evidence="1">Cell membrane</location>
        <topology evidence="1">Lipid-anchor</topology>
    </subcellularLocation>
</comment>
<feature type="signal peptide" evidence="1">
    <location>
        <begin position="1"/>
        <end position="16"/>
    </location>
</feature>
<feature type="chain" id="PRO_0000013728" description="Uncharacterized lipoprotein YqeF">
    <location>
        <begin position="17"/>
        <end position="243"/>
    </location>
</feature>
<feature type="lipid moiety-binding region" description="N-palmitoyl cysteine" evidence="1">
    <location>
        <position position="17"/>
    </location>
</feature>
<feature type="lipid moiety-binding region" description="S-diacylglycerol cysteine" evidence="1">
    <location>
        <position position="17"/>
    </location>
</feature>
<accession>P54451</accession>
<organism>
    <name type="scientific">Bacillus subtilis (strain 168)</name>
    <dbReference type="NCBI Taxonomy" id="224308"/>
    <lineage>
        <taxon>Bacteria</taxon>
        <taxon>Bacillati</taxon>
        <taxon>Bacillota</taxon>
        <taxon>Bacilli</taxon>
        <taxon>Bacillales</taxon>
        <taxon>Bacillaceae</taxon>
        <taxon>Bacillus</taxon>
    </lineage>
</organism>
<evidence type="ECO:0000255" key="1">
    <source>
        <dbReference type="PROSITE-ProRule" id="PRU00303"/>
    </source>
</evidence>
<keyword id="KW-1003">Cell membrane</keyword>
<keyword id="KW-0449">Lipoprotein</keyword>
<keyword id="KW-0472">Membrane</keyword>
<keyword id="KW-0564">Palmitate</keyword>
<keyword id="KW-1185">Reference proteome</keyword>
<keyword id="KW-0732">Signal</keyword>
<proteinExistence type="inferred from homology"/>
<dbReference type="EMBL" id="D84432">
    <property type="protein sequence ID" value="BAA12442.1"/>
    <property type="molecule type" value="Genomic_DNA"/>
</dbReference>
<dbReference type="EMBL" id="AL009126">
    <property type="protein sequence ID" value="CAB14511.1"/>
    <property type="molecule type" value="Genomic_DNA"/>
</dbReference>
<dbReference type="PIR" id="B69951">
    <property type="entry name" value="B69951"/>
</dbReference>
<dbReference type="RefSeq" id="NP_390447.1">
    <property type="nucleotide sequence ID" value="NC_000964.3"/>
</dbReference>
<dbReference type="RefSeq" id="WP_003229964.1">
    <property type="nucleotide sequence ID" value="NZ_OZ025638.1"/>
</dbReference>
<dbReference type="SMR" id="P54451"/>
<dbReference type="FunCoup" id="P54451">
    <property type="interactions" value="23"/>
</dbReference>
<dbReference type="STRING" id="224308.BSU25700"/>
<dbReference type="PaxDb" id="224308-BSU25700"/>
<dbReference type="EnsemblBacteria" id="CAB14511">
    <property type="protein sequence ID" value="CAB14511"/>
    <property type="gene ID" value="BSU_25700"/>
</dbReference>
<dbReference type="GeneID" id="937814"/>
<dbReference type="KEGG" id="bsu:BSU25700"/>
<dbReference type="PATRIC" id="fig|224308.179.peg.2794"/>
<dbReference type="eggNOG" id="COG2755">
    <property type="taxonomic scope" value="Bacteria"/>
</dbReference>
<dbReference type="InParanoid" id="P54451"/>
<dbReference type="OrthoDB" id="388542at2"/>
<dbReference type="BioCyc" id="BSUB:BSU25700-MONOMER"/>
<dbReference type="Proteomes" id="UP000001570">
    <property type="component" value="Chromosome"/>
</dbReference>
<dbReference type="GO" id="GO:0005886">
    <property type="term" value="C:plasma membrane"/>
    <property type="evidence" value="ECO:0007669"/>
    <property type="project" value="UniProtKB-SubCell"/>
</dbReference>
<dbReference type="GO" id="GO:0016788">
    <property type="term" value="F:hydrolase activity, acting on ester bonds"/>
    <property type="evidence" value="ECO:0007669"/>
    <property type="project" value="InterPro"/>
</dbReference>
<dbReference type="Gene3D" id="3.40.50.1110">
    <property type="entry name" value="SGNH hydrolase"/>
    <property type="match status" value="1"/>
</dbReference>
<dbReference type="InterPro" id="IPR001087">
    <property type="entry name" value="GDSL"/>
</dbReference>
<dbReference type="InterPro" id="IPR045136">
    <property type="entry name" value="Iah1-like"/>
</dbReference>
<dbReference type="InterPro" id="IPR036514">
    <property type="entry name" value="SGNH_hydro_sf"/>
</dbReference>
<dbReference type="PANTHER" id="PTHR14209">
    <property type="entry name" value="ISOAMYL ACETATE-HYDROLYZING ESTERASE 1"/>
    <property type="match status" value="1"/>
</dbReference>
<dbReference type="PANTHER" id="PTHR14209:SF19">
    <property type="entry name" value="ISOAMYL ACETATE-HYDROLYZING ESTERASE 1 HOMOLOG"/>
    <property type="match status" value="1"/>
</dbReference>
<dbReference type="Pfam" id="PF00657">
    <property type="entry name" value="Lipase_GDSL"/>
    <property type="match status" value="1"/>
</dbReference>
<dbReference type="SUPFAM" id="SSF52266">
    <property type="entry name" value="SGNH hydrolase"/>
    <property type="match status" value="1"/>
</dbReference>
<dbReference type="PROSITE" id="PS51257">
    <property type="entry name" value="PROKAR_LIPOPROTEIN"/>
    <property type="match status" value="1"/>
</dbReference>
<reference key="1">
    <citation type="journal article" date="1996" name="Microbiology">
        <title>Systematic sequencing of the 283 kb 210 degrees-232 degrees region of the Bacillus subtilis genome containing the skin element and many sporulation genes.</title>
        <authorList>
            <person name="Mizuno M."/>
            <person name="Masuda S."/>
            <person name="Takemaru K."/>
            <person name="Hosono S."/>
            <person name="Sato T."/>
            <person name="Takeuchi M."/>
            <person name="Kobayashi Y."/>
        </authorList>
    </citation>
    <scope>NUCLEOTIDE SEQUENCE [GENOMIC DNA]</scope>
    <source>
        <strain>168 / JH642</strain>
    </source>
</reference>
<reference key="2">
    <citation type="journal article" date="1997" name="Nature">
        <title>The complete genome sequence of the Gram-positive bacterium Bacillus subtilis.</title>
        <authorList>
            <person name="Kunst F."/>
            <person name="Ogasawara N."/>
            <person name="Moszer I."/>
            <person name="Albertini A.M."/>
            <person name="Alloni G."/>
            <person name="Azevedo V."/>
            <person name="Bertero M.G."/>
            <person name="Bessieres P."/>
            <person name="Bolotin A."/>
            <person name="Borchert S."/>
            <person name="Borriss R."/>
            <person name="Boursier L."/>
            <person name="Brans A."/>
            <person name="Braun M."/>
            <person name="Brignell S.C."/>
            <person name="Bron S."/>
            <person name="Brouillet S."/>
            <person name="Bruschi C.V."/>
            <person name="Caldwell B."/>
            <person name="Capuano V."/>
            <person name="Carter N.M."/>
            <person name="Choi S.-K."/>
            <person name="Codani J.-J."/>
            <person name="Connerton I.F."/>
            <person name="Cummings N.J."/>
            <person name="Daniel R.A."/>
            <person name="Denizot F."/>
            <person name="Devine K.M."/>
            <person name="Duesterhoeft A."/>
            <person name="Ehrlich S.D."/>
            <person name="Emmerson P.T."/>
            <person name="Entian K.-D."/>
            <person name="Errington J."/>
            <person name="Fabret C."/>
            <person name="Ferrari E."/>
            <person name="Foulger D."/>
            <person name="Fritz C."/>
            <person name="Fujita M."/>
            <person name="Fujita Y."/>
            <person name="Fuma S."/>
            <person name="Galizzi A."/>
            <person name="Galleron N."/>
            <person name="Ghim S.-Y."/>
            <person name="Glaser P."/>
            <person name="Goffeau A."/>
            <person name="Golightly E.J."/>
            <person name="Grandi G."/>
            <person name="Guiseppi G."/>
            <person name="Guy B.J."/>
            <person name="Haga K."/>
            <person name="Haiech J."/>
            <person name="Harwood C.R."/>
            <person name="Henaut A."/>
            <person name="Hilbert H."/>
            <person name="Holsappel S."/>
            <person name="Hosono S."/>
            <person name="Hullo M.-F."/>
            <person name="Itaya M."/>
            <person name="Jones L.-M."/>
            <person name="Joris B."/>
            <person name="Karamata D."/>
            <person name="Kasahara Y."/>
            <person name="Klaerr-Blanchard M."/>
            <person name="Klein C."/>
            <person name="Kobayashi Y."/>
            <person name="Koetter P."/>
            <person name="Koningstein G."/>
            <person name="Krogh S."/>
            <person name="Kumano M."/>
            <person name="Kurita K."/>
            <person name="Lapidus A."/>
            <person name="Lardinois S."/>
            <person name="Lauber J."/>
            <person name="Lazarevic V."/>
            <person name="Lee S.-M."/>
            <person name="Levine A."/>
            <person name="Liu H."/>
            <person name="Masuda S."/>
            <person name="Mauel C."/>
            <person name="Medigue C."/>
            <person name="Medina N."/>
            <person name="Mellado R.P."/>
            <person name="Mizuno M."/>
            <person name="Moestl D."/>
            <person name="Nakai S."/>
            <person name="Noback M."/>
            <person name="Noone D."/>
            <person name="O'Reilly M."/>
            <person name="Ogawa K."/>
            <person name="Ogiwara A."/>
            <person name="Oudega B."/>
            <person name="Park S.-H."/>
            <person name="Parro V."/>
            <person name="Pohl T.M."/>
            <person name="Portetelle D."/>
            <person name="Porwollik S."/>
            <person name="Prescott A.M."/>
            <person name="Presecan E."/>
            <person name="Pujic P."/>
            <person name="Purnelle B."/>
            <person name="Rapoport G."/>
            <person name="Rey M."/>
            <person name="Reynolds S."/>
            <person name="Rieger M."/>
            <person name="Rivolta C."/>
            <person name="Rocha E."/>
            <person name="Roche B."/>
            <person name="Rose M."/>
            <person name="Sadaie Y."/>
            <person name="Sato T."/>
            <person name="Scanlan E."/>
            <person name="Schleich S."/>
            <person name="Schroeter R."/>
            <person name="Scoffone F."/>
            <person name="Sekiguchi J."/>
            <person name="Sekowska A."/>
            <person name="Seror S.J."/>
            <person name="Serror P."/>
            <person name="Shin B.-S."/>
            <person name="Soldo B."/>
            <person name="Sorokin A."/>
            <person name="Tacconi E."/>
            <person name="Takagi T."/>
            <person name="Takahashi H."/>
            <person name="Takemaru K."/>
            <person name="Takeuchi M."/>
            <person name="Tamakoshi A."/>
            <person name="Tanaka T."/>
            <person name="Terpstra P."/>
            <person name="Tognoni A."/>
            <person name="Tosato V."/>
            <person name="Uchiyama S."/>
            <person name="Vandenbol M."/>
            <person name="Vannier F."/>
            <person name="Vassarotti A."/>
            <person name="Viari A."/>
            <person name="Wambutt R."/>
            <person name="Wedler E."/>
            <person name="Wedler H."/>
            <person name="Weitzenegger T."/>
            <person name="Winters P."/>
            <person name="Wipat A."/>
            <person name="Yamamoto H."/>
            <person name="Yamane K."/>
            <person name="Yasumoto K."/>
            <person name="Yata K."/>
            <person name="Yoshida K."/>
            <person name="Yoshikawa H.-F."/>
            <person name="Zumstein E."/>
            <person name="Yoshikawa H."/>
            <person name="Danchin A."/>
        </authorList>
    </citation>
    <scope>NUCLEOTIDE SEQUENCE [LARGE SCALE GENOMIC DNA]</scope>
    <source>
        <strain>168</strain>
    </source>
</reference>
<protein>
    <recommendedName>
        <fullName>Uncharacterized lipoprotein YqeF</fullName>
    </recommendedName>
</protein>
<sequence>MKHFIILFLLLFVTAGCEGRGYEDVVAFGDSNTRGSNWDYRDYPKAQQWVNILKTAERGNLDILNAGIGGQTTEDARLRFQTDVLDQKPKYLFIMFGTNDAAILTEGKPRVSKQRFRENLVYFIEESRKHGIKPILMTCIPIIEGNGKHHLFYYSRYQAAAFEPKGGARKWHNSYNDITRDVSKRLDVPLVDNWKHFIEADGGKATDEALIQSGLIDPSGNHMTPKGARIVYEGIQDGQILQR</sequence>